<proteinExistence type="inferred from homology"/>
<feature type="chain" id="PRO_1000080457" description="Tetraacyldisaccharide 4'-kinase">
    <location>
        <begin position="1"/>
        <end position="331"/>
    </location>
</feature>
<feature type="binding site" evidence="1">
    <location>
        <begin position="55"/>
        <end position="62"/>
    </location>
    <ligand>
        <name>ATP</name>
        <dbReference type="ChEBI" id="CHEBI:30616"/>
    </ligand>
</feature>
<name>LPXK_AERS4</name>
<gene>
    <name evidence="1" type="primary">lpxK</name>
    <name type="ordered locus">ASA_1552</name>
</gene>
<reference key="1">
    <citation type="journal article" date="2008" name="BMC Genomics">
        <title>The genome of Aeromonas salmonicida subsp. salmonicida A449: insights into the evolution of a fish pathogen.</title>
        <authorList>
            <person name="Reith M.E."/>
            <person name="Singh R.K."/>
            <person name="Curtis B."/>
            <person name="Boyd J.M."/>
            <person name="Bouevitch A."/>
            <person name="Kimball J."/>
            <person name="Munholland J."/>
            <person name="Murphy C."/>
            <person name="Sarty D."/>
            <person name="Williams J."/>
            <person name="Nash J.H."/>
            <person name="Johnson S.C."/>
            <person name="Brown L.L."/>
        </authorList>
    </citation>
    <scope>NUCLEOTIDE SEQUENCE [LARGE SCALE GENOMIC DNA]</scope>
    <source>
        <strain>A449</strain>
    </source>
</reference>
<accession>A4SL68</accession>
<evidence type="ECO:0000255" key="1">
    <source>
        <dbReference type="HAMAP-Rule" id="MF_00409"/>
    </source>
</evidence>
<dbReference type="EC" id="2.7.1.130" evidence="1"/>
<dbReference type="EMBL" id="CP000644">
    <property type="protein sequence ID" value="ABO89640.1"/>
    <property type="molecule type" value="Genomic_DNA"/>
</dbReference>
<dbReference type="RefSeq" id="WP_005320089.1">
    <property type="nucleotide sequence ID" value="NC_009348.1"/>
</dbReference>
<dbReference type="SMR" id="A4SL68"/>
<dbReference type="STRING" id="29491.GCA_000820065_03959"/>
<dbReference type="KEGG" id="asa:ASA_1552"/>
<dbReference type="eggNOG" id="COG1663">
    <property type="taxonomic scope" value="Bacteria"/>
</dbReference>
<dbReference type="HOGENOM" id="CLU_038816_2_0_6"/>
<dbReference type="UniPathway" id="UPA00359">
    <property type="reaction ID" value="UER00482"/>
</dbReference>
<dbReference type="Proteomes" id="UP000000225">
    <property type="component" value="Chromosome"/>
</dbReference>
<dbReference type="GO" id="GO:0005886">
    <property type="term" value="C:plasma membrane"/>
    <property type="evidence" value="ECO:0007669"/>
    <property type="project" value="TreeGrafter"/>
</dbReference>
<dbReference type="GO" id="GO:0005524">
    <property type="term" value="F:ATP binding"/>
    <property type="evidence" value="ECO:0007669"/>
    <property type="project" value="UniProtKB-UniRule"/>
</dbReference>
<dbReference type="GO" id="GO:0009029">
    <property type="term" value="F:tetraacyldisaccharide 4'-kinase activity"/>
    <property type="evidence" value="ECO:0007669"/>
    <property type="project" value="UniProtKB-UniRule"/>
</dbReference>
<dbReference type="GO" id="GO:0009245">
    <property type="term" value="P:lipid A biosynthetic process"/>
    <property type="evidence" value="ECO:0007669"/>
    <property type="project" value="UniProtKB-UniRule"/>
</dbReference>
<dbReference type="GO" id="GO:0009244">
    <property type="term" value="P:lipopolysaccharide core region biosynthetic process"/>
    <property type="evidence" value="ECO:0007669"/>
    <property type="project" value="TreeGrafter"/>
</dbReference>
<dbReference type="HAMAP" id="MF_00409">
    <property type="entry name" value="LpxK"/>
    <property type="match status" value="1"/>
</dbReference>
<dbReference type="InterPro" id="IPR003758">
    <property type="entry name" value="LpxK"/>
</dbReference>
<dbReference type="InterPro" id="IPR027417">
    <property type="entry name" value="P-loop_NTPase"/>
</dbReference>
<dbReference type="NCBIfam" id="TIGR00682">
    <property type="entry name" value="lpxK"/>
    <property type="match status" value="1"/>
</dbReference>
<dbReference type="PANTHER" id="PTHR42724">
    <property type="entry name" value="TETRAACYLDISACCHARIDE 4'-KINASE"/>
    <property type="match status" value="1"/>
</dbReference>
<dbReference type="PANTHER" id="PTHR42724:SF1">
    <property type="entry name" value="TETRAACYLDISACCHARIDE 4'-KINASE, MITOCHONDRIAL-RELATED"/>
    <property type="match status" value="1"/>
</dbReference>
<dbReference type="Pfam" id="PF02606">
    <property type="entry name" value="LpxK"/>
    <property type="match status" value="1"/>
</dbReference>
<dbReference type="SUPFAM" id="SSF52540">
    <property type="entry name" value="P-loop containing nucleoside triphosphate hydrolases"/>
    <property type="match status" value="1"/>
</dbReference>
<organism>
    <name type="scientific">Aeromonas salmonicida (strain A449)</name>
    <dbReference type="NCBI Taxonomy" id="382245"/>
    <lineage>
        <taxon>Bacteria</taxon>
        <taxon>Pseudomonadati</taxon>
        <taxon>Pseudomonadota</taxon>
        <taxon>Gammaproteobacteria</taxon>
        <taxon>Aeromonadales</taxon>
        <taxon>Aeromonadaceae</taxon>
        <taxon>Aeromonas</taxon>
    </lineage>
</organism>
<keyword id="KW-0067">ATP-binding</keyword>
<keyword id="KW-0418">Kinase</keyword>
<keyword id="KW-0441">Lipid A biosynthesis</keyword>
<keyword id="KW-0444">Lipid biosynthesis</keyword>
<keyword id="KW-0443">Lipid metabolism</keyword>
<keyword id="KW-0547">Nucleotide-binding</keyword>
<keyword id="KW-0808">Transferase</keyword>
<sequence length="331" mass="36285">MLQQLWYGKSGWRWLLAPFALLFAILSGARRFAYRRGWCKAYRATVPVVVVGNISVGGNGKTPVVIWLVEQLQARGFRPGVVSRGYGGKAPHYPYRLDAASTTAQAGDEPVLIARRSGCPVVVAPKRADAVRLLEQSGEVDIIITDDGLQHYGLARDIELVVVDGVRRFGNACLLPMGPLREPVTRLKRVDAIICNGGEPAKGEYAMRLVADVPRRVRDDAQATEPLPRAVDALAGIGHPPRFFATLAGLGYELHQQVGYGDHHAFDRDELVARFGQRPLLMTEKDAVKCRTFALDSWWYLPVSAELPASLLDTLLQKLPSLTVPRSGSGL</sequence>
<comment type="function">
    <text evidence="1">Transfers the gamma-phosphate of ATP to the 4'-position of a tetraacyldisaccharide 1-phosphate intermediate (termed DS-1-P) to form tetraacyldisaccharide 1,4'-bis-phosphate (lipid IVA).</text>
</comment>
<comment type="catalytic activity">
    <reaction evidence="1">
        <text>a lipid A disaccharide + ATP = a lipid IVA + ADP + H(+)</text>
        <dbReference type="Rhea" id="RHEA:67840"/>
        <dbReference type="ChEBI" id="CHEBI:15378"/>
        <dbReference type="ChEBI" id="CHEBI:30616"/>
        <dbReference type="ChEBI" id="CHEBI:176343"/>
        <dbReference type="ChEBI" id="CHEBI:176425"/>
        <dbReference type="ChEBI" id="CHEBI:456216"/>
        <dbReference type="EC" id="2.7.1.130"/>
    </reaction>
</comment>
<comment type="pathway">
    <text evidence="1">Glycolipid biosynthesis; lipid IV(A) biosynthesis; lipid IV(A) from (3R)-3-hydroxytetradecanoyl-[acyl-carrier-protein] and UDP-N-acetyl-alpha-D-glucosamine: step 6/6.</text>
</comment>
<comment type="similarity">
    <text evidence="1">Belongs to the LpxK family.</text>
</comment>
<protein>
    <recommendedName>
        <fullName evidence="1">Tetraacyldisaccharide 4'-kinase</fullName>
        <ecNumber evidence="1">2.7.1.130</ecNumber>
    </recommendedName>
    <alternativeName>
        <fullName evidence="1">Lipid A 4'-kinase</fullName>
    </alternativeName>
</protein>